<dbReference type="EMBL" id="CP000568">
    <property type="protein sequence ID" value="ABN52609.1"/>
    <property type="molecule type" value="Genomic_DNA"/>
</dbReference>
<dbReference type="RefSeq" id="WP_003520182.1">
    <property type="nucleotide sequence ID" value="NC_009012.1"/>
</dbReference>
<dbReference type="SMR" id="A3DF80"/>
<dbReference type="STRING" id="203119.Cthe_1377"/>
<dbReference type="GeneID" id="35805697"/>
<dbReference type="KEGG" id="cth:Cthe_1377"/>
<dbReference type="eggNOG" id="COG4492">
    <property type="taxonomic scope" value="Bacteria"/>
</dbReference>
<dbReference type="HOGENOM" id="CLU_128147_0_0_9"/>
<dbReference type="OrthoDB" id="9788773at2"/>
<dbReference type="Proteomes" id="UP000002145">
    <property type="component" value="Chromosome"/>
</dbReference>
<dbReference type="CDD" id="cd04888">
    <property type="entry name" value="ACT_PheB-BS"/>
    <property type="match status" value="1"/>
</dbReference>
<dbReference type="Gene3D" id="3.30.70.260">
    <property type="match status" value="1"/>
</dbReference>
<dbReference type="HAMAP" id="MF_00707">
    <property type="entry name" value="UPF0735"/>
    <property type="match status" value="1"/>
</dbReference>
<dbReference type="InterPro" id="IPR045865">
    <property type="entry name" value="ACT-like_dom_sf"/>
</dbReference>
<dbReference type="InterPro" id="IPR002912">
    <property type="entry name" value="ACT_dom"/>
</dbReference>
<dbReference type="InterPro" id="IPR008310">
    <property type="entry name" value="UPF0735_ACT_dom-cont"/>
</dbReference>
<dbReference type="NCBIfam" id="NF003361">
    <property type="entry name" value="PRK04435.1"/>
    <property type="match status" value="1"/>
</dbReference>
<dbReference type="Pfam" id="PF13291">
    <property type="entry name" value="ACT_4"/>
    <property type="match status" value="1"/>
</dbReference>
<dbReference type="PIRSF" id="PIRSF025624">
    <property type="entry name" value="ACT_PheB"/>
    <property type="match status" value="1"/>
</dbReference>
<dbReference type="SUPFAM" id="SSF55021">
    <property type="entry name" value="ACT-like"/>
    <property type="match status" value="1"/>
</dbReference>
<dbReference type="PROSITE" id="PS51671">
    <property type="entry name" value="ACT"/>
    <property type="match status" value="1"/>
</dbReference>
<organism>
    <name type="scientific">Acetivibrio thermocellus (strain ATCC 27405 / DSM 1237 / JCM 9322 / NBRC 103400 / NCIMB 10682 / NRRL B-4536 / VPI 7372)</name>
    <name type="common">Clostridium thermocellum</name>
    <dbReference type="NCBI Taxonomy" id="203119"/>
    <lineage>
        <taxon>Bacteria</taxon>
        <taxon>Bacillati</taxon>
        <taxon>Bacillota</taxon>
        <taxon>Clostridia</taxon>
        <taxon>Eubacteriales</taxon>
        <taxon>Oscillospiraceae</taxon>
        <taxon>Acetivibrio</taxon>
    </lineage>
</organism>
<comment type="similarity">
    <text evidence="1">Belongs to the UPF0735 family.</text>
</comment>
<accession>A3DF80</accession>
<keyword id="KW-1185">Reference proteome</keyword>
<reference key="1">
    <citation type="submission" date="2007-02" db="EMBL/GenBank/DDBJ databases">
        <title>Complete sequence of Clostridium thermocellum ATCC 27405.</title>
        <authorList>
            <consortium name="US DOE Joint Genome Institute"/>
            <person name="Copeland A."/>
            <person name="Lucas S."/>
            <person name="Lapidus A."/>
            <person name="Barry K."/>
            <person name="Detter J.C."/>
            <person name="Glavina del Rio T."/>
            <person name="Hammon N."/>
            <person name="Israni S."/>
            <person name="Dalin E."/>
            <person name="Tice H."/>
            <person name="Pitluck S."/>
            <person name="Chertkov O."/>
            <person name="Brettin T."/>
            <person name="Bruce D."/>
            <person name="Han C."/>
            <person name="Tapia R."/>
            <person name="Gilna P."/>
            <person name="Schmutz J."/>
            <person name="Larimer F."/>
            <person name="Land M."/>
            <person name="Hauser L."/>
            <person name="Kyrpides N."/>
            <person name="Mikhailova N."/>
            <person name="Wu J.H.D."/>
            <person name="Newcomb M."/>
            <person name="Richardson P."/>
        </authorList>
    </citation>
    <scope>NUCLEOTIDE SEQUENCE [LARGE SCALE GENOMIC DNA]</scope>
    <source>
        <strain>ATCC 27405 / DSM 1237 / JCM 9322 / NBRC 103400 / NCIMB 10682 / NRRL B-4536 / VPI 7372</strain>
    </source>
</reference>
<name>Y1377_ACET2</name>
<gene>
    <name type="ordered locus">Cthe_1377</name>
</gene>
<proteinExistence type="inferred from homology"/>
<protein>
    <recommendedName>
        <fullName evidence="1">UPF0735 ACT domain-containing protein Cthe_1377</fullName>
    </recommendedName>
</protein>
<evidence type="ECO:0000255" key="1">
    <source>
        <dbReference type="HAMAP-Rule" id="MF_00707"/>
    </source>
</evidence>
<feature type="chain" id="PRO_0000366310" description="UPF0735 ACT domain-containing protein Cthe_1377">
    <location>
        <begin position="1"/>
        <end position="147"/>
    </location>
</feature>
<feature type="domain" description="ACT" evidence="1">
    <location>
        <begin position="71"/>
        <end position="146"/>
    </location>
</feature>
<sequence>MRNTSKYYLVDASVLPKVFIKVVEAKRILASGAIKNVNEAVRKVGISRSAYYKYKDHIFPFYETSQGKVITLFFTVEDYAGILSSIINRIADSKANIITINQNIPINGLADVTITIETGQMTRDIKDLLDDISSIEGVKRQEILARE</sequence>